<feature type="signal peptide" evidence="1">
    <location>
        <begin position="1"/>
        <end position="21"/>
    </location>
</feature>
<feature type="propeptide" id="PRO_0000435084" evidence="3">
    <location>
        <begin position="22"/>
        <end position="30"/>
    </location>
</feature>
<feature type="chain" id="PRO_0000435085" description="Teretoxin Tsu11.2">
    <location>
        <begin position="31"/>
        <end position="72"/>
    </location>
</feature>
<comment type="subcellular location">
    <subcellularLocation>
        <location evidence="4">Secreted</location>
    </subcellularLocation>
</comment>
<comment type="tissue specificity">
    <text evidence="4">Expressed by the venom duct.</text>
</comment>
<comment type="domain">
    <text>The cysteine framework is XI (C-C-CC-CC-C-C).</text>
</comment>
<comment type="PTM">
    <text evidence="3">Contains 4 disulfide bonds.</text>
</comment>
<comment type="similarity">
    <text>Belongs to the teretoxin H (TH) superfamily.</text>
</comment>
<keyword id="KW-1015">Disulfide bond</keyword>
<keyword id="KW-0964">Secreted</keyword>
<keyword id="KW-0732">Signal</keyword>
<keyword id="KW-0800">Toxin</keyword>
<accession>P0DN59</accession>
<reference key="1">
    <citation type="journal article" date="2015" name="Genome Biol. Evol.">
        <title>Molecular diversity and gene evolution of the venom arsenal of Terebridae predatory marine snails.</title>
        <authorList>
            <person name="Gorson J."/>
            <person name="Ramrattan G."/>
            <person name="Verdes A."/>
            <person name="Wright E.M."/>
            <person name="Kantor Y."/>
            <person name="Rajaram Srinivasan R."/>
            <person name="Musunuri R."/>
            <person name="Packer D."/>
            <person name="Albano G."/>
            <person name="Qiu W.G."/>
            <person name="Holford M."/>
        </authorList>
    </citation>
    <scope>NUCLEOTIDE SEQUENCE [MRNA]</scope>
    <source>
        <tissue>Venom duct</tissue>
    </source>
</reference>
<dbReference type="GO" id="GO:0005576">
    <property type="term" value="C:extracellular region"/>
    <property type="evidence" value="ECO:0007669"/>
    <property type="project" value="UniProtKB-SubCell"/>
</dbReference>
<dbReference type="GO" id="GO:0090729">
    <property type="term" value="F:toxin activity"/>
    <property type="evidence" value="ECO:0007669"/>
    <property type="project" value="UniProtKB-KW"/>
</dbReference>
<proteinExistence type="inferred from homology"/>
<name>TB2_TERSU</name>
<organism>
    <name type="scientific">Terebra subulata</name>
    <name type="common">Chocolate spotted auger</name>
    <name type="synonym">Buccinum subulatum</name>
    <dbReference type="NCBI Taxonomy" id="89435"/>
    <lineage>
        <taxon>Eukaryota</taxon>
        <taxon>Metazoa</taxon>
        <taxon>Spiralia</taxon>
        <taxon>Lophotrochozoa</taxon>
        <taxon>Mollusca</taxon>
        <taxon>Gastropoda</taxon>
        <taxon>Caenogastropoda</taxon>
        <taxon>Neogastropoda</taxon>
        <taxon>Conoidea</taxon>
        <taxon>Terebridae</taxon>
        <taxon>Terebra</taxon>
    </lineage>
</organism>
<evidence type="ECO:0000255" key="1"/>
<evidence type="ECO:0000303" key="2">
    <source>
    </source>
</evidence>
<evidence type="ECO:0000305" key="3"/>
<evidence type="ECO:0000305" key="4">
    <source>
    </source>
</evidence>
<sequence>MMAKATMAFCFLLMLTTVMLPTEGKTIAGRTDCEQHTDCSAASGPVYCCQDSDCCGGVDYICTNYGQCVRHF</sequence>
<protein>
    <recommendedName>
        <fullName evidence="2">Teretoxin Tsu11.2</fullName>
    </recommendedName>
</protein>